<accession>Q91ZV0</accession>
<accession>Q8CIE3</accession>
<accession>Q8R311</accession>
<organism>
    <name type="scientific">Mus musculus</name>
    <name type="common">Mouse</name>
    <dbReference type="NCBI Taxonomy" id="10090"/>
    <lineage>
        <taxon>Eukaryota</taxon>
        <taxon>Metazoa</taxon>
        <taxon>Chordata</taxon>
        <taxon>Craniata</taxon>
        <taxon>Vertebrata</taxon>
        <taxon>Euteleostomi</taxon>
        <taxon>Mammalia</taxon>
        <taxon>Eutheria</taxon>
        <taxon>Euarchontoglires</taxon>
        <taxon>Glires</taxon>
        <taxon>Rodentia</taxon>
        <taxon>Myomorpha</taxon>
        <taxon>Muroidea</taxon>
        <taxon>Muridae</taxon>
        <taxon>Murinae</taxon>
        <taxon>Mus</taxon>
        <taxon>Mus</taxon>
    </lineage>
</organism>
<reference key="1">
    <citation type="journal article" date="2003" name="J. Biol. Chem.">
        <title>Specific expression and regulation of the new melanoma inhibitory activity-related gene MIA2 in hepatocytes.</title>
        <authorList>
            <person name="Bosserhoff A.K."/>
            <person name="Moser M."/>
            <person name="Schoelmerich J."/>
            <person name="Buettner R."/>
            <person name="Hellerbrand C."/>
        </authorList>
    </citation>
    <scope>NUCLEOTIDE SEQUENCE [MRNA] (ISOFORM 2)</scope>
    <scope>TISSUE SPECIFICITY</scope>
    <scope>DEVELOPMENTAL STAGE</scope>
    <source>
        <tissue>Embryo</tissue>
    </source>
</reference>
<reference key="2">
    <citation type="journal article" date="2010" name="Cell">
        <title>A tissue-specific atlas of mouse protein phosphorylation and expression.</title>
        <authorList>
            <person name="Huttlin E.L."/>
            <person name="Jedrychowski M.P."/>
            <person name="Elias J.E."/>
            <person name="Goswami T."/>
            <person name="Rad R."/>
            <person name="Beausoleil S.A."/>
            <person name="Villen J."/>
            <person name="Haas W."/>
            <person name="Sowa M.E."/>
            <person name="Gygi S.P."/>
        </authorList>
    </citation>
    <scope>IDENTIFICATION BY MASS SPECTROMETRY [LARGE SCALE ANALYSIS]</scope>
    <source>
        <tissue>Kidney</tissue>
        <tissue>Liver</tissue>
        <tissue>Pancreas</tissue>
    </source>
</reference>
<reference key="3">
    <citation type="journal article" date="2004" name="Genome Res.">
        <title>The status, quality, and expansion of the NIH full-length cDNA project: the Mammalian Gene Collection (MGC).</title>
        <authorList>
            <consortium name="The MGC Project Team"/>
        </authorList>
    </citation>
    <scope>NUCLEOTIDE SEQUENCE [LARGE SCALE MRNA] (ISOFORM 3)</scope>
    <source>
        <strain>FVB/N</strain>
        <tissue>Liver</tissue>
        <tissue>Mammary tumor</tissue>
    </source>
</reference>
<reference key="4">
    <citation type="journal article" date="2011" name="J. Lipid Res.">
        <title>Reduced cholesterol and triglycerides in mice with a mutation in Mia2, a liver protein that localizes to ER exit sites.</title>
        <authorList>
            <person name="Pitman J.L."/>
            <person name="Bonnet D.J."/>
            <person name="Curtiss L.K."/>
            <person name="Gekakis N."/>
        </authorList>
    </citation>
    <scope>FUNCTION</scope>
    <scope>INTERACTION WITH SEC23A AND SEC24C</scope>
    <scope>SUBCELLULAR LOCATION</scope>
    <scope>TOPOLOGY</scope>
    <scope>TISSUE SPECIFICITY</scope>
    <scope>DOMAIN</scope>
    <scope>REGION</scope>
    <scope>MUTAGENESIS OF PHE-90</scope>
</reference>
<evidence type="ECO:0000250" key="1">
    <source>
        <dbReference type="UniProtKB" id="Q96PC5"/>
    </source>
</evidence>
<evidence type="ECO:0000255" key="2"/>
<evidence type="ECO:0000255" key="3">
    <source>
        <dbReference type="PROSITE-ProRule" id="PRU00192"/>
    </source>
</evidence>
<evidence type="ECO:0000256" key="4">
    <source>
        <dbReference type="SAM" id="MobiDB-lite"/>
    </source>
</evidence>
<evidence type="ECO:0000269" key="5">
    <source>
    </source>
</evidence>
<evidence type="ECO:0000269" key="6">
    <source>
    </source>
</evidence>
<evidence type="ECO:0000303" key="7">
    <source>
    </source>
</evidence>
<evidence type="ECO:0000305" key="8"/>
<evidence type="ECO:0000305" key="9">
    <source>
    </source>
</evidence>
<evidence type="ECO:0000312" key="10">
    <source>
        <dbReference type="MGI" id="MGI:2159614"/>
    </source>
</evidence>
<protein>
    <recommendedName>
        <fullName evidence="8">Melanoma inhibitory activity protein 2</fullName>
    </recommendedName>
    <alternativeName>
        <fullName evidence="1">CTAGE family member 5 ER export factor</fullName>
    </alternativeName>
</protein>
<gene>
    <name evidence="10" type="primary">Mia2</name>
    <name evidence="1" type="synonym">Ctage5</name>
</gene>
<name>MIA2_MOUSE</name>
<comment type="function">
    <text evidence="1 6">Plays a role in the transport of cargos that are too large to fit into COPII-coated vesicles and require specific mechanisms to be incorporated into membrane-bound carriers and exported from the endoplasmic reticulum. Plays a role in the secretion of lipoproteins, pre-chylomicrons and pre-VLDLs, by participating in their export from the endoplasmic reticulum (By similarity). Thereby, may play a role in cholesterol and triglyceride homeostasis (PubMed:21807889). Required for collagen VII (COL7A1) secretion by loading COL7A1 into transport carriers and recruiting PREB/SEC12 at the endoplasmic reticulum exit sites (By similarity).</text>
</comment>
<comment type="subunit">
    <text evidence="1 6">Interacts with MIA3 (By similarity). Interacts with the COPII coat subunits SEC23A, SEC23B and maybe SEC24C (By similarity) (PubMed:21807889). Interacts with PREB; recruits PREB to endoplasmic reticulum exit sites. Interacts with APOB (By similarity).</text>
</comment>
<comment type="subcellular location">
    <subcellularLocation>
        <location evidence="6">Endoplasmic reticulum membrane</location>
        <topology evidence="9">Single-pass membrane protein</topology>
    </subcellularLocation>
    <text evidence="6">Localizes to endoplasmic reticulum exit sites (ERES), also known as transitional endoplasmic reticulum (tER).</text>
</comment>
<comment type="alternative products">
    <event type="alternative splicing"/>
    <isoform>
        <id>Q91ZV0-1</id>
        <name>1</name>
        <name evidence="7">Mia2 p240</name>
        <sequence type="displayed"/>
    </isoform>
    <isoform>
        <id>Q91ZV0-2</id>
        <name>2</name>
        <sequence type="described" ref="VSP_058474 VSP_058475"/>
    </isoform>
    <isoform>
        <id>Q91ZV0-3</id>
        <name>3</name>
        <sequence type="described" ref="VSP_060016"/>
    </isoform>
</comment>
<comment type="tissue specificity">
    <text evidence="5 6">Isoform 1 is expressed in liver (at protein level) (PubMed:12586826, PubMed:21807889). Isoform 2 is highly expressed in liver and weakly in testis (PubMed:12586826).</text>
</comment>
<comment type="developmental stage">
    <text evidence="5">Expression is seen at 12.5 dpc and 14.5 dpc embryonic stages.</text>
</comment>
<comment type="domain">
    <text evidence="1 6">The proline-rich domain (PRD) contains repeated PPP motifs. A single PPP motif is necessary and sufficient to mediate interaction with the COPII coat subunits SEC23A and SEC23B (PubMed:21807889). The coiled coil domains mediate interaction with MIA3. The first coiled coil domain mediates interaction with PREB (By similarity).</text>
</comment>
<comment type="miscellaneous">
    <molecule>Isoform 1</molecule>
    <text evidence="9">Readthrough transcript producing a functional fusion protein MIA2-CTAGE5 with similarity to MIA3.</text>
</comment>
<comment type="similarity">
    <text evidence="8">Belongs to the MIA/OTOR family.</text>
</comment>
<feature type="signal peptide" evidence="2">
    <location>
        <begin position="1"/>
        <end position="22"/>
    </location>
</feature>
<feature type="chain" id="PRO_0000019032" description="Melanoma inhibitory activity protein 2" evidence="2">
    <location>
        <begin position="23"/>
        <end position="1396"/>
    </location>
</feature>
<feature type="topological domain" description="Lumenal" evidence="8">
    <location>
        <begin position="23"/>
        <end position="604"/>
    </location>
</feature>
<feature type="intramembrane region" evidence="2">
    <location>
        <begin position="605"/>
        <end position="625"/>
    </location>
</feature>
<feature type="topological domain" description="Lumenal" evidence="8">
    <location>
        <begin position="626"/>
        <end position="628"/>
    </location>
</feature>
<feature type="transmembrane region" description="Helical" evidence="2">
    <location>
        <begin position="629"/>
        <end position="649"/>
    </location>
</feature>
<feature type="topological domain" description="Cytoplasmic" evidence="8">
    <location>
        <begin position="650"/>
        <end position="1396"/>
    </location>
</feature>
<feature type="domain" description="SH3" evidence="3">
    <location>
        <begin position="39"/>
        <end position="101"/>
    </location>
</feature>
<feature type="region of interest" description="Disordered" evidence="4">
    <location>
        <begin position="197"/>
        <end position="288"/>
    </location>
</feature>
<feature type="region of interest" description="Disordered" evidence="4">
    <location>
        <begin position="331"/>
        <end position="361"/>
    </location>
</feature>
<feature type="region of interest" description="Disordered" evidence="4">
    <location>
        <begin position="396"/>
        <end position="421"/>
    </location>
</feature>
<feature type="region of interest" description="Disordered" evidence="4">
    <location>
        <begin position="525"/>
        <end position="557"/>
    </location>
</feature>
<feature type="region of interest" description="Mediates interaction with MIA3" evidence="1">
    <location>
        <begin position="651"/>
        <end position="1243"/>
    </location>
</feature>
<feature type="region of interest" description="Disordered" evidence="4">
    <location>
        <begin position="1103"/>
        <end position="1396"/>
    </location>
</feature>
<feature type="region of interest" description="Proline-rich domain (PRD); probably mediates interaction with COPII coat subunits" evidence="6">
    <location>
        <begin position="1105"/>
        <end position="1396"/>
    </location>
</feature>
<feature type="coiled-coil region" evidence="2">
    <location>
        <begin position="693"/>
        <end position="867"/>
    </location>
</feature>
<feature type="coiled-coil region" evidence="2">
    <location>
        <begin position="914"/>
        <end position="1082"/>
    </location>
</feature>
<feature type="compositionally biased region" description="Acidic residues" evidence="4">
    <location>
        <begin position="243"/>
        <end position="258"/>
    </location>
</feature>
<feature type="compositionally biased region" description="Low complexity" evidence="4">
    <location>
        <begin position="1135"/>
        <end position="1146"/>
    </location>
</feature>
<feature type="compositionally biased region" description="Basic and acidic residues" evidence="4">
    <location>
        <begin position="1165"/>
        <end position="1179"/>
    </location>
</feature>
<feature type="compositionally biased region" description="Polar residues" evidence="4">
    <location>
        <begin position="1252"/>
        <end position="1269"/>
    </location>
</feature>
<feature type="compositionally biased region" description="Pro residues" evidence="4">
    <location>
        <begin position="1331"/>
        <end position="1342"/>
    </location>
</feature>
<feature type="compositionally biased region" description="Pro residues" evidence="4">
    <location>
        <begin position="1351"/>
        <end position="1368"/>
    </location>
</feature>
<feature type="glycosylation site" description="N-linked (GlcNAc...) asparagine" evidence="2">
    <location>
        <position position="59"/>
    </location>
</feature>
<feature type="glycosylation site" description="N-linked (GlcNAc...) asparagine" evidence="2">
    <location>
        <position position="366"/>
    </location>
</feature>
<feature type="splice variant" id="VSP_060016" description="In isoform 3.">
    <location>
        <begin position="1"/>
        <end position="619"/>
    </location>
</feature>
<feature type="splice variant" id="VSP_058474" description="In isoform 2.">
    <original>D</original>
    <variation>G</variation>
    <location>
        <position position="517"/>
    </location>
</feature>
<feature type="splice variant" id="VSP_058475" description="In isoform 2.">
    <location>
        <begin position="518"/>
        <end position="1396"/>
    </location>
</feature>
<feature type="mutagenesis site" description="Decreases expression of isoform 1." evidence="6">
    <original>F</original>
    <variation>S</variation>
    <location>
        <position position="90"/>
    </location>
</feature>
<feature type="sequence conflict" description="In Ref. 3; AAH24076/AAH26864." evidence="8" ref="3">
    <original>E</original>
    <variation>EDI</variation>
    <location>
        <position position="880"/>
    </location>
</feature>
<proteinExistence type="evidence at protein level"/>
<keyword id="KW-0025">Alternative splicing</keyword>
<keyword id="KW-0175">Coiled coil</keyword>
<keyword id="KW-0256">Endoplasmic reticulum</keyword>
<keyword id="KW-0325">Glycoprotein</keyword>
<keyword id="KW-0472">Membrane</keyword>
<keyword id="KW-1185">Reference proteome</keyword>
<keyword id="KW-0728">SH3 domain</keyword>
<keyword id="KW-0732">Signal</keyword>
<keyword id="KW-0812">Transmembrane</keyword>
<keyword id="KW-1133">Transmembrane helix</keyword>
<sequence>MAEVSVQRILLLVVSLAKCLEGTKLLAHLKKCGDLECETLISRVLALRDYTGPDCRYLNFTTGEEISVYVKLGGDREDLWAGSKGKDFGFFPRDAVEIEEVFISEEVEMPTKSDFLCLLGEGYIFGSEQSELNSEDDEEHMYPYEKDEDQNYNIYEGDFQPEPDLYAAAEGTLLEDQIPASEAPDDFRFSSEWKAWEGAGSQGGGEQDYTADSDQDLPSLSKPERQGWFGLGTEEAEEKVFESDTEPTQELALEEESDLEKLHSGEPQVELEQEPKSETLEFSSVPDEEYELESETESILKPQASGWFGEGLTSYLGFGNEEAGLELLSKESNPPLQDIPSSVPPDEEVPAPCREISTDKEDAVINDSSVLSPSWFYYGFGMLGFTNADEDNIVSDKGENEDGEVDNLKHPIGSDFDPEKEQERKIVTVETEDQAGTESVLEKTDESGSMQYLKKFFDNPWGFQSLPEDTELPFSKKMLDQDDIVENDKIEELSTENSPTGSMKDPVMLASRYVLSDIDSEVELPMEEHEGVHFKPSSSKRNEDDSNSWADPEELSVAQTDGSAEGALLDTQLVSPKEHAADFQLLKYLLQIDVYGFMSSALSPIEILLESVVAALPEDMRADFNPSGFSLELAVCVLSVGLLAVVLFLWRGFRSIRSRFYVGREKKLALELSALIEEKCKLLDKVSIVQKEYEGLESSLKEASFEKESTEAQSLEFVEGSQISEATYENLEQSKSKLEDEILLLEEKLEEERAKHSEQDELMADISKRIQSLEDESKSLKSQVAEAKTTFRIFEINEERLKGAIKDALNENSQLQESQKQLLQETEMMKEQVNDLDKQKVALEESRAQAEQALSEKESQIETLVTSLLKMKDWAAVLGEADDGNLDLDMKSGLENTAALDNQPKGALKKLIYAAKLNASLKALEGERNQVYTQLSEVDQVKEDLTEHIKSLESKQASLQSEKTEFESESQKLQQKLKVITELYQENEMKLHRKLTVEENYRLEKEEKLSKVDEKISHATEELETCRQRAKDLEEELERTIHSYQGQVISHEKKAHDNWLAARTLERNLNDLRKENAHNRQKLTETEFKFELLEKDPYALDVPNTAFGREHSPYGPSPLGRPPSETRAFLSPPTLLEGPLRLSPLLPGGGGRGSRGPENLLDHQMNTERGESSYDRLSDAPRAPSDRSLSPPWEQDRRMTAHPPPGQPYSDPALQRQDRFYPNSGRLSGPAELRSYNMPSLDKVDGPVPSEMESSGNGTKDNLGNSNVPDSPIPAECEAAGRGFFPPPFPPVRDPLFPVDPRSQFMRRGPSFPPPPPGSIYAAPRDYFPPRDFPGPPLPPFPGRTVYAPRGFPPYLPPRAGFFPPPPHPESRSELPPDLIPPSKEPAADPPETQEA</sequence>
<dbReference type="EMBL" id="AF390177">
    <property type="protein sequence ID" value="AAL26992.2"/>
    <property type="molecule type" value="mRNA"/>
</dbReference>
<dbReference type="EMBL" id="BC024076">
    <property type="protein sequence ID" value="AAH24076.1"/>
    <property type="molecule type" value="mRNA"/>
</dbReference>
<dbReference type="EMBL" id="BC026864">
    <property type="protein sequence ID" value="AAH26864.1"/>
    <property type="molecule type" value="mRNA"/>
</dbReference>
<dbReference type="RefSeq" id="NP_001355768.1">
    <molecule id="Q91ZV0-1"/>
    <property type="nucleotide sequence ID" value="NM_001368839.1"/>
</dbReference>
<dbReference type="RefSeq" id="NP_796295.1">
    <property type="nucleotide sequence ID" value="NM_177321.2"/>
</dbReference>
<dbReference type="RefSeq" id="XP_036013400.1">
    <molecule id="Q91ZV0-3"/>
    <property type="nucleotide sequence ID" value="XM_036157507.1"/>
</dbReference>
<dbReference type="SMR" id="Q91ZV0"/>
<dbReference type="BioGRID" id="237201">
    <property type="interactions" value="1"/>
</dbReference>
<dbReference type="FunCoup" id="Q91ZV0">
    <property type="interactions" value="1035"/>
</dbReference>
<dbReference type="STRING" id="10090.ENSMUSP00000070572"/>
<dbReference type="GlyCosmos" id="Q91ZV0">
    <property type="glycosylation" value="2 sites, No reported glycans"/>
</dbReference>
<dbReference type="GlyGen" id="Q91ZV0">
    <property type="glycosylation" value="2 sites"/>
</dbReference>
<dbReference type="iPTMnet" id="Q91ZV0"/>
<dbReference type="PhosphoSitePlus" id="Q91ZV0"/>
<dbReference type="SwissPalm" id="Q91ZV0"/>
<dbReference type="jPOST" id="Q91ZV0"/>
<dbReference type="PaxDb" id="10090-ENSMUSP00000070572"/>
<dbReference type="PeptideAtlas" id="Q91ZV0"/>
<dbReference type="ProteomicsDB" id="284142"/>
<dbReference type="ProteomicsDB" id="295901">
    <molecule id="Q91ZV0-1"/>
</dbReference>
<dbReference type="ProteomicsDB" id="295902">
    <molecule id="Q91ZV0-2"/>
</dbReference>
<dbReference type="Pumba" id="Q91ZV0"/>
<dbReference type="DNASU" id="338320"/>
<dbReference type="GeneID" id="338320"/>
<dbReference type="UCSC" id="uc007nqc.1">
    <molecule id="Q91ZV0-1"/>
    <property type="organism name" value="mouse"/>
</dbReference>
<dbReference type="AGR" id="MGI:2159614"/>
<dbReference type="MGI" id="MGI:2159614">
    <property type="gene designation" value="Mia2"/>
</dbReference>
<dbReference type="eggNOG" id="ENOG502QUND">
    <property type="taxonomic scope" value="Eukaryota"/>
</dbReference>
<dbReference type="HOGENOM" id="CLU_028032_0_0_1"/>
<dbReference type="InParanoid" id="Q91ZV0"/>
<dbReference type="TreeFam" id="TF332724"/>
<dbReference type="Reactome" id="R-MMU-5694530">
    <property type="pathway name" value="Cargo concentration in the ER"/>
</dbReference>
<dbReference type="BioGRID-ORCS" id="338320">
    <property type="hits" value="12 hits in 81 CRISPR screens"/>
</dbReference>
<dbReference type="ChiTaRS" id="Mia2">
    <property type="organism name" value="mouse"/>
</dbReference>
<dbReference type="PRO" id="PR:Q91ZV0"/>
<dbReference type="Proteomes" id="UP000000589">
    <property type="component" value="Unplaced"/>
</dbReference>
<dbReference type="RNAct" id="Q91ZV0">
    <property type="molecule type" value="protein"/>
</dbReference>
<dbReference type="GO" id="GO:0070971">
    <property type="term" value="C:endoplasmic reticulum exit site"/>
    <property type="evidence" value="ECO:0000250"/>
    <property type="project" value="UniProtKB"/>
</dbReference>
<dbReference type="GO" id="GO:0005789">
    <property type="term" value="C:endoplasmic reticulum membrane"/>
    <property type="evidence" value="ECO:0007669"/>
    <property type="project" value="UniProtKB-SubCell"/>
</dbReference>
<dbReference type="GO" id="GO:0038024">
    <property type="term" value="F:cargo receptor activity"/>
    <property type="evidence" value="ECO:0000250"/>
    <property type="project" value="UniProtKB"/>
</dbReference>
<dbReference type="GO" id="GO:0042632">
    <property type="term" value="P:cholesterol homeostasis"/>
    <property type="evidence" value="ECO:0000315"/>
    <property type="project" value="MGI"/>
</dbReference>
<dbReference type="GO" id="GO:0006888">
    <property type="term" value="P:endoplasmic reticulum to Golgi vesicle-mediated transport"/>
    <property type="evidence" value="ECO:0000250"/>
    <property type="project" value="UniProtKB"/>
</dbReference>
<dbReference type="GO" id="GO:0042953">
    <property type="term" value="P:lipoprotein transport"/>
    <property type="evidence" value="ECO:0000250"/>
    <property type="project" value="UniProtKB"/>
</dbReference>
<dbReference type="GO" id="GO:0032527">
    <property type="term" value="P:protein exit from endoplasmic reticulum"/>
    <property type="evidence" value="ECO:0000250"/>
    <property type="project" value="UniProtKB"/>
</dbReference>
<dbReference type="GO" id="GO:0070973">
    <property type="term" value="P:protein localization to endoplasmic reticulum exit site"/>
    <property type="evidence" value="ECO:0000250"/>
    <property type="project" value="UniProtKB"/>
</dbReference>
<dbReference type="GO" id="GO:0070328">
    <property type="term" value="P:triglyceride homeostasis"/>
    <property type="evidence" value="ECO:0000315"/>
    <property type="project" value="MGI"/>
</dbReference>
<dbReference type="GO" id="GO:0035459">
    <property type="term" value="P:vesicle cargo loading"/>
    <property type="evidence" value="ECO:0000250"/>
    <property type="project" value="UniProtKB"/>
</dbReference>
<dbReference type="FunFam" id="2.30.30.40:FF:000142">
    <property type="entry name" value="melanoma inhibitory activity protein 2 isoform X2"/>
    <property type="match status" value="1"/>
</dbReference>
<dbReference type="FunFam" id="1.20.5.340:FF:000044">
    <property type="entry name" value="MIA SH3 domain ER export factor 2"/>
    <property type="match status" value="1"/>
</dbReference>
<dbReference type="Gene3D" id="2.30.30.40">
    <property type="entry name" value="SH3 Domains"/>
    <property type="match status" value="1"/>
</dbReference>
<dbReference type="InterPro" id="IPR051500">
    <property type="entry name" value="cTAGE_MIA/OTOR"/>
</dbReference>
<dbReference type="InterPro" id="IPR036028">
    <property type="entry name" value="SH3-like_dom_sf"/>
</dbReference>
<dbReference type="InterPro" id="IPR001452">
    <property type="entry name" value="SH3_domain"/>
</dbReference>
<dbReference type="PANTHER" id="PTHR23158:SF38">
    <property type="entry name" value="MELANOMA INHIBITORY ACTIVITY PROTEIN 2"/>
    <property type="match status" value="1"/>
</dbReference>
<dbReference type="PANTHER" id="PTHR23158">
    <property type="entry name" value="MELANOMA INHIBITORY ACTIVITY-RELATED"/>
    <property type="match status" value="1"/>
</dbReference>
<dbReference type="Pfam" id="PF07653">
    <property type="entry name" value="SH3_2"/>
    <property type="match status" value="1"/>
</dbReference>
<dbReference type="SUPFAM" id="SSF50044">
    <property type="entry name" value="SH3-domain"/>
    <property type="match status" value="1"/>
</dbReference>
<dbReference type="PROSITE" id="PS50002">
    <property type="entry name" value="SH3"/>
    <property type="match status" value="1"/>
</dbReference>